<organism>
    <name type="scientific">Mus musculus</name>
    <name type="common">Mouse</name>
    <dbReference type="NCBI Taxonomy" id="10090"/>
    <lineage>
        <taxon>Eukaryota</taxon>
        <taxon>Metazoa</taxon>
        <taxon>Chordata</taxon>
        <taxon>Craniata</taxon>
        <taxon>Vertebrata</taxon>
        <taxon>Euteleostomi</taxon>
        <taxon>Mammalia</taxon>
        <taxon>Eutheria</taxon>
        <taxon>Euarchontoglires</taxon>
        <taxon>Glires</taxon>
        <taxon>Rodentia</taxon>
        <taxon>Myomorpha</taxon>
        <taxon>Muroidea</taxon>
        <taxon>Muridae</taxon>
        <taxon>Murinae</taxon>
        <taxon>Mus</taxon>
        <taxon>Mus</taxon>
    </lineage>
</organism>
<name>CPEB4_MOUSE</name>
<feature type="chain" id="PRO_0000269265" description="Cytoplasmic polyadenylation element-binding protein 4">
    <location>
        <begin position="1"/>
        <end position="729"/>
    </location>
</feature>
<feature type="domain" description="RRM 1" evidence="3">
    <location>
        <begin position="472"/>
        <end position="563"/>
    </location>
</feature>
<feature type="domain" description="RRM 2" evidence="3">
    <location>
        <begin position="580"/>
        <end position="662"/>
    </location>
</feature>
<feature type="region of interest" description="Disordered" evidence="4">
    <location>
        <begin position="20"/>
        <end position="50"/>
    </location>
</feature>
<feature type="region of interest" description="Disordered" evidence="4">
    <location>
        <begin position="78"/>
        <end position="133"/>
    </location>
</feature>
<feature type="region of interest" description="Disordered" evidence="4">
    <location>
        <begin position="218"/>
        <end position="324"/>
    </location>
</feature>
<feature type="region of interest" description="RNA-binding" evidence="1">
    <location>
        <begin position="541"/>
        <end position="543"/>
    </location>
</feature>
<feature type="compositionally biased region" description="Basic residues" evidence="4">
    <location>
        <begin position="24"/>
        <end position="35"/>
    </location>
</feature>
<feature type="compositionally biased region" description="Low complexity" evidence="4">
    <location>
        <begin position="83"/>
        <end position="96"/>
    </location>
</feature>
<feature type="compositionally biased region" description="Basic residues" evidence="4">
    <location>
        <begin position="232"/>
        <end position="249"/>
    </location>
</feature>
<feature type="compositionally biased region" description="Low complexity" evidence="4">
    <location>
        <begin position="285"/>
        <end position="300"/>
    </location>
</feature>
<feature type="compositionally biased region" description="Gly residues" evidence="4">
    <location>
        <begin position="301"/>
        <end position="311"/>
    </location>
</feature>
<feature type="binding site" evidence="2">
    <location>
        <position position="667"/>
    </location>
    <ligand>
        <name>Zn(2+)</name>
        <dbReference type="ChEBI" id="CHEBI:29105"/>
        <label>1</label>
    </ligand>
</feature>
<feature type="binding site" evidence="2">
    <location>
        <position position="675"/>
    </location>
    <ligand>
        <name>Zn(2+)</name>
        <dbReference type="ChEBI" id="CHEBI:29105"/>
        <label>1</label>
    </ligand>
</feature>
<feature type="binding site" evidence="2">
    <location>
        <position position="684"/>
    </location>
    <ligand>
        <name>Zn(2+)</name>
        <dbReference type="ChEBI" id="CHEBI:29105"/>
        <label>2</label>
    </ligand>
</feature>
<feature type="binding site" evidence="2">
    <location>
        <position position="689"/>
    </location>
    <ligand>
        <name>Zn(2+)</name>
        <dbReference type="ChEBI" id="CHEBI:29105"/>
        <label>2</label>
    </ligand>
</feature>
<feature type="binding site" evidence="2">
    <location>
        <position position="694"/>
    </location>
    <ligand>
        <name>Zn(2+)</name>
        <dbReference type="ChEBI" id="CHEBI:29105"/>
        <label>1</label>
    </ligand>
</feature>
<feature type="binding site" evidence="2">
    <location>
        <position position="697"/>
    </location>
    <ligand>
        <name>Zn(2+)</name>
        <dbReference type="ChEBI" id="CHEBI:29105"/>
        <label>1</label>
    </ligand>
</feature>
<feature type="binding site" evidence="2">
    <location>
        <position position="702"/>
    </location>
    <ligand>
        <name>Zn(2+)</name>
        <dbReference type="ChEBI" id="CHEBI:29105"/>
        <label>2</label>
    </ligand>
</feature>
<feature type="binding site" evidence="2">
    <location>
        <position position="710"/>
    </location>
    <ligand>
        <name>Zn(2+)</name>
        <dbReference type="ChEBI" id="CHEBI:29105"/>
        <label>2</label>
    </ligand>
</feature>
<feature type="site" description="RNA-binding" evidence="1">
    <location>
        <position position="473"/>
    </location>
</feature>
<feature type="site" description="Important for the positionning of RRM1 relative to RRM2" evidence="1">
    <location>
        <position position="561"/>
    </location>
</feature>
<feature type="modified residue" description="Phosphoserine" evidence="15 16">
    <location>
        <position position="97"/>
    </location>
</feature>
<feature type="modified residue" description="Phosphoserine" evidence="16">
    <location>
        <position position="99"/>
    </location>
</feature>
<feature type="modified residue" description="Phosphoserine" evidence="1">
    <location>
        <position position="137"/>
    </location>
</feature>
<feature type="modified residue" description="Phosphoserine" evidence="1">
    <location>
        <position position="252"/>
    </location>
</feature>
<feature type="modified residue" description="Phosphoserine" evidence="1">
    <location>
        <position position="255"/>
    </location>
</feature>
<feature type="modified residue" description="Phosphothreonine" evidence="1">
    <location>
        <position position="326"/>
    </location>
</feature>
<feature type="modified residue" description="Phosphoserine" evidence="1">
    <location>
        <position position="330"/>
    </location>
</feature>
<feature type="modified residue" description="Phosphoserine" evidence="1">
    <location>
        <position position="332"/>
    </location>
</feature>
<feature type="splice variant" id="VSP_022043" description="In isoform 4." evidence="11">
    <location>
        <begin position="402"/>
        <end position="427"/>
    </location>
</feature>
<feature type="splice variant" id="VSP_022044" description="In isoform 3." evidence="11">
    <location>
        <begin position="402"/>
        <end position="419"/>
    </location>
</feature>
<feature type="splice variant" id="VSP_022045" description="In isoform 5." evidence="12 13">
    <location>
        <begin position="404"/>
        <end position="428"/>
    </location>
</feature>
<feature type="splice variant" id="VSP_022046" description="In isoform 2." evidence="11">
    <location>
        <begin position="420"/>
        <end position="427"/>
    </location>
</feature>
<proteinExistence type="evidence at protein level"/>
<protein>
    <recommendedName>
        <fullName>Cytoplasmic polyadenylation element-binding protein 4</fullName>
        <shortName>CPE-BP4</shortName>
        <shortName>CPE-binding protein 4</shortName>
        <shortName>mCPEB-4</shortName>
    </recommendedName>
</protein>
<comment type="function">
    <text evidence="1 6 7 8 10">Sequence-specific RNA-binding protein that binds to the cytoplasmic polyadenylation element (CPE), an uridine-rich sequence element (consensus sequence 5'-UUUUUAU-3') within the mRNA 3'-UTR (PubMed:17024188). RNA binding results in a clear conformational change analogous to the Venus fly trap mechanism (By similarity). Regulates activation of unfolded protein response (UPR) in the process of adaptation to ER stress in liver, by maintaining translation of CPE-regulated mRNAs in conditions in which global protein synthesis is inhibited (PubMed:28092655). Required for cell cycle progression, specifically for cytokinesis and chromosomal segregation (By similarity). Plays a role as an oncogene promoting tumor growth and progression by positively regulating translation of t-plasminogen activator/PLAT (PubMed:22138752). Stimulates proliferation of melanocytes (By similarity). In contrast to CPEB1 and CPEB3, does not play role in synaptic plasticity, learning and memory (PubMed:24386439).</text>
</comment>
<comment type="subunit">
    <text evidence="1">Interacts with TOB1.</text>
</comment>
<comment type="subcellular location">
    <subcellularLocation>
        <location evidence="9">Cytoplasm</location>
    </subcellularLocation>
    <subcellularLocation>
        <location evidence="6 8">Cell projection</location>
        <location evidence="6 8">Dendrite</location>
    </subcellularLocation>
    <subcellularLocation>
        <location evidence="8">Cell projection</location>
        <location evidence="8">Dendritic spine</location>
    </subcellularLocation>
    <subcellularLocation>
        <location evidence="6">Postsynaptic density</location>
    </subcellularLocation>
    <subcellularLocation>
        <location evidence="9">Cell projection</location>
        <location evidence="9">Axon</location>
    </subcellularLocation>
    <subcellularLocation>
        <location evidence="9">Cell projection</location>
        <location evidence="9">Growth cone</location>
    </subcellularLocation>
    <subcellularLocation>
        <location evidence="10">Endoplasmic reticulum</location>
    </subcellularLocation>
    <subcellularLocation>
        <location evidence="10">Cytoplasm</location>
        <location evidence="10">Perinuclear region</location>
    </subcellularLocation>
</comment>
<comment type="alternative products">
    <event type="alternative splicing"/>
    <isoform>
        <id>Q7TN98-1</id>
        <name>1</name>
        <name>mCPEB-4a</name>
        <sequence type="displayed"/>
    </isoform>
    <isoform>
        <id>Q7TN98-2</id>
        <name>2</name>
        <name>mCPEB-4b</name>
        <sequence type="described" ref="VSP_022046"/>
    </isoform>
    <isoform>
        <id>Q7TN98-3</id>
        <name>3</name>
        <name>mCPEB-4c</name>
        <sequence type="described" ref="VSP_022044"/>
    </isoform>
    <isoform>
        <id>Q7TN98-4</id>
        <name>4</name>
        <name>mCPEB-4d</name>
        <sequence type="described" ref="VSP_022043"/>
    </isoform>
    <isoform>
        <id>Q7TN98-5</id>
        <name>5</name>
        <sequence type="described" ref="VSP_022045"/>
    </isoform>
</comment>
<comment type="tissue specificity">
    <text evidence="5 6 8 9 10">Highly expressed in brain, including hippocampus, amygdala, granule and Purkinje cells of the cerebellum (at protein level) (PubMed:17024188, PubMed:24386439). Expressed in spinal cord (at protein level) (PubMed:27381259). Expressed in kidney, lung and heart (at protein level) (PubMed:12871996, PubMed:24386439, PubMed:27381259). Expressed in liver (at protein level) (PubMed:12871996, PubMed:24386439, PubMed:27381259, PubMed:28092655). Expressed in spleen and testis (at protein level) (PubMed:12871996, PubMed:24386439). Weakly expressed in ovary and in granular cells of dentate gyrus and the pyramidal cells of CA3 and CA1 of the hippocampus (PubMed:12871996).</text>
</comment>
<comment type="developmental stage">
    <text evidence="9">Highly expressed in developing brain, spinal cord and attached dorsal root ganglia (DRG) (at protein level). At embryonic day 18.5 expressed in gray matter of spinal cord, diencephalons, hippocampus and parts of midbrain and hindbrain. At postnatal day 20 expression persists in spinal cord and brain. Expressed in embryonic heart.</text>
</comment>
<comment type="induction">
    <text evidence="5 10">Up-regulated in granular cells of the dentate gyrus of CA1 and CA3 after kainate-induced seizures (PubMed:12871996). Up-regulated by high-fat-diet and aging-induced endoplasmic reticulum stress (PubMed:28092655). Expression level fluctuation follows the circadian clock amplitude (PubMed:28092655).</text>
</comment>
<comment type="domain">
    <text evidence="1 2">The 2 RRM domains and the C-terminal region mediate interaction with CPE-containing RNA. The interdomain linker (564-579) acts as a hinge to fix the relative orientation of the 2 RRMs. The ZZ domain (509-566) coordinates 2 Zn ions and is probably implicated in mediating interactions with other proteins in addition to increasing the affinity of the RRMs for the CPEs. Unlike in CPEB1, a continuous polar interface is formed between the 2 RRMs.</text>
</comment>
<comment type="disruption phenotype">
    <text evidence="8 10">No visible phenotype at young age or under unchallenged conditions (PubMed:24386439, PubMed:28092655). At 80 weeks or under high fat diet feeding conditions, mutant mice develop hepatosteatosis with excessive liver weight and accumulation of cytosolic lipid droplets sometimes accompanied by fibrosis (PubMed:28092655).</text>
</comment>
<comment type="similarity">
    <text evidence="14">Belongs to the RRM CPEB family.</text>
</comment>
<dbReference type="EMBL" id="AY313775">
    <property type="protein sequence ID" value="AAQ20844.1"/>
    <property type="molecule type" value="mRNA"/>
</dbReference>
<dbReference type="EMBL" id="AK173229">
    <property type="protein sequence ID" value="BAD32507.1"/>
    <property type="molecule type" value="mRNA"/>
</dbReference>
<dbReference type="EMBL" id="BC115430">
    <property type="protein sequence ID" value="AAI15431.1"/>
    <property type="molecule type" value="mRNA"/>
</dbReference>
<dbReference type="EMBL" id="BC115431">
    <property type="protein sequence ID" value="AAI15432.1"/>
    <property type="molecule type" value="mRNA"/>
</dbReference>
<dbReference type="EMBL" id="BC145863">
    <property type="protein sequence ID" value="AAI45864.1"/>
    <property type="molecule type" value="mRNA"/>
</dbReference>
<dbReference type="EMBL" id="BC145865">
    <property type="protein sequence ID" value="AAI45866.1"/>
    <property type="molecule type" value="mRNA"/>
</dbReference>
<dbReference type="CCDS" id="CCDS24514.1">
    <molecule id="Q7TN98-1"/>
</dbReference>
<dbReference type="RefSeq" id="NP_001277605.1">
    <molecule id="Q7TN98-2"/>
    <property type="nucleotide sequence ID" value="NM_001290676.1"/>
</dbReference>
<dbReference type="RefSeq" id="NP_001277607.1">
    <molecule id="Q7TN98-5"/>
    <property type="nucleotide sequence ID" value="NM_001290678.1"/>
</dbReference>
<dbReference type="RefSeq" id="NP_080528.2">
    <molecule id="Q7TN98-1"/>
    <property type="nucleotide sequence ID" value="NM_026252.4"/>
</dbReference>
<dbReference type="BMRB" id="Q7TN98"/>
<dbReference type="SMR" id="Q7TN98"/>
<dbReference type="BioGRID" id="212288">
    <property type="interactions" value="15"/>
</dbReference>
<dbReference type="FunCoup" id="Q7TN98">
    <property type="interactions" value="1001"/>
</dbReference>
<dbReference type="STRING" id="10090.ENSMUSP00000020543"/>
<dbReference type="GlyGen" id="Q7TN98">
    <property type="glycosylation" value="1 site"/>
</dbReference>
<dbReference type="iPTMnet" id="Q7TN98"/>
<dbReference type="PhosphoSitePlus" id="Q7TN98"/>
<dbReference type="SwissPalm" id="Q7TN98"/>
<dbReference type="jPOST" id="Q7TN98"/>
<dbReference type="PaxDb" id="10090-ENSMUSP00000020543"/>
<dbReference type="ProteomicsDB" id="285285">
    <molecule id="Q7TN98-1"/>
</dbReference>
<dbReference type="ProteomicsDB" id="285286">
    <molecule id="Q7TN98-2"/>
</dbReference>
<dbReference type="ProteomicsDB" id="285287">
    <molecule id="Q7TN98-3"/>
</dbReference>
<dbReference type="ProteomicsDB" id="285288">
    <molecule id="Q7TN98-4"/>
</dbReference>
<dbReference type="ProteomicsDB" id="285289">
    <molecule id="Q7TN98-5"/>
</dbReference>
<dbReference type="Pumba" id="Q7TN98"/>
<dbReference type="Antibodypedia" id="28980">
    <property type="antibodies" value="149 antibodies from 23 providers"/>
</dbReference>
<dbReference type="DNASU" id="67579"/>
<dbReference type="Ensembl" id="ENSMUST00000020543.13">
    <molecule id="Q7TN98-1"/>
    <property type="protein sequence ID" value="ENSMUSP00000020543.7"/>
    <property type="gene ID" value="ENSMUSG00000020300.15"/>
</dbReference>
<dbReference type="GeneID" id="67579"/>
<dbReference type="KEGG" id="mmu:67579"/>
<dbReference type="UCSC" id="uc007iir.2">
    <molecule id="Q7TN98-2"/>
    <property type="organism name" value="mouse"/>
</dbReference>
<dbReference type="UCSC" id="uc007iis.2">
    <molecule id="Q7TN98-5"/>
    <property type="organism name" value="mouse"/>
</dbReference>
<dbReference type="UCSC" id="uc007iit.2">
    <molecule id="Q7TN98-1"/>
    <property type="organism name" value="mouse"/>
</dbReference>
<dbReference type="AGR" id="MGI:1914829"/>
<dbReference type="CTD" id="80315"/>
<dbReference type="MGI" id="MGI:1914829">
    <property type="gene designation" value="Cpeb4"/>
</dbReference>
<dbReference type="VEuPathDB" id="HostDB:ENSMUSG00000020300"/>
<dbReference type="eggNOG" id="KOG0129">
    <property type="taxonomic scope" value="Eukaryota"/>
</dbReference>
<dbReference type="GeneTree" id="ENSGT00940000154998"/>
<dbReference type="InParanoid" id="Q7TN98"/>
<dbReference type="OMA" id="XRTYGRR"/>
<dbReference type="OrthoDB" id="10033548at2759"/>
<dbReference type="PhylomeDB" id="Q7TN98"/>
<dbReference type="TreeFam" id="TF317658"/>
<dbReference type="BioGRID-ORCS" id="67579">
    <property type="hits" value="1 hit in 77 CRISPR screens"/>
</dbReference>
<dbReference type="ChiTaRS" id="Cpeb4">
    <property type="organism name" value="mouse"/>
</dbReference>
<dbReference type="PRO" id="PR:Q7TN98"/>
<dbReference type="Proteomes" id="UP000000589">
    <property type="component" value="Chromosome 11"/>
</dbReference>
<dbReference type="RNAct" id="Q7TN98">
    <property type="molecule type" value="protein"/>
</dbReference>
<dbReference type="Bgee" id="ENSMUSG00000020300">
    <property type="expression patterns" value="Expressed in ciliary body and 249 other cell types or tissues"/>
</dbReference>
<dbReference type="ExpressionAtlas" id="Q7TN98">
    <property type="expression patterns" value="baseline and differential"/>
</dbReference>
<dbReference type="GO" id="GO:0005737">
    <property type="term" value="C:cytoplasm"/>
    <property type="evidence" value="ECO:0000314"/>
    <property type="project" value="UniProtKB"/>
</dbReference>
<dbReference type="GO" id="GO:0030425">
    <property type="term" value="C:dendrite"/>
    <property type="evidence" value="ECO:0000314"/>
    <property type="project" value="UniProtKB"/>
</dbReference>
<dbReference type="GO" id="GO:0043197">
    <property type="term" value="C:dendritic spine"/>
    <property type="evidence" value="ECO:0007669"/>
    <property type="project" value="UniProtKB-SubCell"/>
</dbReference>
<dbReference type="GO" id="GO:0005783">
    <property type="term" value="C:endoplasmic reticulum"/>
    <property type="evidence" value="ECO:0000314"/>
    <property type="project" value="UniProtKB"/>
</dbReference>
<dbReference type="GO" id="GO:0030426">
    <property type="term" value="C:growth cone"/>
    <property type="evidence" value="ECO:0007669"/>
    <property type="project" value="UniProtKB-SubCell"/>
</dbReference>
<dbReference type="GO" id="GO:0005634">
    <property type="term" value="C:nucleus"/>
    <property type="evidence" value="ECO:0000314"/>
    <property type="project" value="UniProtKB"/>
</dbReference>
<dbReference type="GO" id="GO:0048471">
    <property type="term" value="C:perinuclear region of cytoplasm"/>
    <property type="evidence" value="ECO:0007669"/>
    <property type="project" value="UniProtKB-SubCell"/>
</dbReference>
<dbReference type="GO" id="GO:0014069">
    <property type="term" value="C:postsynaptic density"/>
    <property type="evidence" value="ECO:0000314"/>
    <property type="project" value="UniProtKB"/>
</dbReference>
<dbReference type="GO" id="GO:0045202">
    <property type="term" value="C:synapse"/>
    <property type="evidence" value="ECO:0000314"/>
    <property type="project" value="MGI"/>
</dbReference>
<dbReference type="GO" id="GO:0046872">
    <property type="term" value="F:metal ion binding"/>
    <property type="evidence" value="ECO:0007669"/>
    <property type="project" value="UniProtKB-KW"/>
</dbReference>
<dbReference type="GO" id="GO:0003730">
    <property type="term" value="F:mRNA 3'-UTR binding"/>
    <property type="evidence" value="ECO:0007669"/>
    <property type="project" value="InterPro"/>
</dbReference>
<dbReference type="GO" id="GO:0003723">
    <property type="term" value="F:RNA binding"/>
    <property type="evidence" value="ECO:0000314"/>
    <property type="project" value="MGI"/>
</dbReference>
<dbReference type="GO" id="GO:0045182">
    <property type="term" value="F:translation regulator activity"/>
    <property type="evidence" value="ECO:0007669"/>
    <property type="project" value="InterPro"/>
</dbReference>
<dbReference type="GO" id="GO:0071230">
    <property type="term" value="P:cellular response to amino acid stimulus"/>
    <property type="evidence" value="ECO:0000314"/>
    <property type="project" value="UniProtKB"/>
</dbReference>
<dbReference type="GO" id="GO:0036294">
    <property type="term" value="P:cellular response to decreased oxygen levels"/>
    <property type="evidence" value="ECO:0000250"/>
    <property type="project" value="UniProtKB"/>
</dbReference>
<dbReference type="GO" id="GO:0042149">
    <property type="term" value="P:cellular response to glucose starvation"/>
    <property type="evidence" value="ECO:0000250"/>
    <property type="project" value="UniProtKB"/>
</dbReference>
<dbReference type="GO" id="GO:0035235">
    <property type="term" value="P:ionotropic glutamate receptor signaling pathway"/>
    <property type="evidence" value="ECO:0000250"/>
    <property type="project" value="UniProtKB"/>
</dbReference>
<dbReference type="GO" id="GO:0043524">
    <property type="term" value="P:negative regulation of neuron apoptotic process"/>
    <property type="evidence" value="ECO:0000250"/>
    <property type="project" value="UniProtKB"/>
</dbReference>
<dbReference type="GO" id="GO:0002931">
    <property type="term" value="P:response to ischemia"/>
    <property type="evidence" value="ECO:0000314"/>
    <property type="project" value="UniProtKB"/>
</dbReference>
<dbReference type="CDD" id="cd19757">
    <property type="entry name" value="Bbox1"/>
    <property type="match status" value="1"/>
</dbReference>
<dbReference type="CDD" id="cd12724">
    <property type="entry name" value="RRM1_CPEB2_like"/>
    <property type="match status" value="1"/>
</dbReference>
<dbReference type="CDD" id="cd12726">
    <property type="entry name" value="RRM2_CPEB2_like"/>
    <property type="match status" value="1"/>
</dbReference>
<dbReference type="FunFam" id="3.30.70.330:FF:000008">
    <property type="entry name" value="Cytoplasmic polyadenylation element-binding 2 isoform X2"/>
    <property type="match status" value="1"/>
</dbReference>
<dbReference type="FunFam" id="4.10.640.40:FF:000001">
    <property type="entry name" value="Cytoplasmic polyadenylation element-binding 2 isoform X2"/>
    <property type="match status" value="1"/>
</dbReference>
<dbReference type="FunFam" id="3.30.70.330:FF:000009">
    <property type="entry name" value="cytoplasmic polyadenylation element-binding protein 2 isoform X1"/>
    <property type="match status" value="1"/>
</dbReference>
<dbReference type="Gene3D" id="3.30.70.330">
    <property type="match status" value="2"/>
</dbReference>
<dbReference type="Gene3D" id="4.10.640.40">
    <property type="entry name" value="Cytoplasmic polyadenylation element-binding protein, ZZ domain"/>
    <property type="match status" value="1"/>
</dbReference>
<dbReference type="InterPro" id="IPR032296">
    <property type="entry name" value="CEBP_ZZ"/>
</dbReference>
<dbReference type="InterPro" id="IPR038446">
    <property type="entry name" value="CEBP_ZZ_sf"/>
</dbReference>
<dbReference type="InterPro" id="IPR034819">
    <property type="entry name" value="CPEB"/>
</dbReference>
<dbReference type="InterPro" id="IPR012677">
    <property type="entry name" value="Nucleotide-bd_a/b_plait_sf"/>
</dbReference>
<dbReference type="InterPro" id="IPR035979">
    <property type="entry name" value="RBD_domain_sf"/>
</dbReference>
<dbReference type="InterPro" id="IPR000504">
    <property type="entry name" value="RRM_dom"/>
</dbReference>
<dbReference type="PANTHER" id="PTHR12566">
    <property type="entry name" value="CYTOPLASMIC POLYADENYLATION ELEMENT BINDING PROTEIN CPEB"/>
    <property type="match status" value="1"/>
</dbReference>
<dbReference type="PANTHER" id="PTHR12566:SF2">
    <property type="entry name" value="CYTOPLASMIC POLYADENYLATION ELEMENT-BINDING PROTEIN 4"/>
    <property type="match status" value="1"/>
</dbReference>
<dbReference type="Pfam" id="PF16366">
    <property type="entry name" value="CEBP_ZZ"/>
    <property type="match status" value="1"/>
</dbReference>
<dbReference type="Pfam" id="PF16367">
    <property type="entry name" value="RRM_7"/>
    <property type="match status" value="1"/>
</dbReference>
<dbReference type="SMART" id="SM00360">
    <property type="entry name" value="RRM"/>
    <property type="match status" value="2"/>
</dbReference>
<dbReference type="SUPFAM" id="SSF54928">
    <property type="entry name" value="RNA-binding domain, RBD"/>
    <property type="match status" value="1"/>
</dbReference>
<dbReference type="PROSITE" id="PS50102">
    <property type="entry name" value="RRM"/>
    <property type="match status" value="2"/>
</dbReference>
<reference key="1">
    <citation type="journal article" date="2003" name="Proc. Natl. Acad. Sci. U.S.A.">
        <title>Two previously undescribed members of the mouse CPEB family of genes and their inducible expression in the principal cell layers of the hippocampus.</title>
        <authorList>
            <person name="Theis M."/>
            <person name="Si K."/>
            <person name="Kandel E.R."/>
        </authorList>
    </citation>
    <scope>NUCLEOTIDE SEQUENCE [MRNA] (ISOFORMS 1; 2; 3 AND 4)</scope>
    <scope>ALTERNATIVE SPLICING</scope>
    <scope>INDUCTION</scope>
    <scope>TISSUE SPECIFICITY</scope>
    <source>
        <strain>BALB/cJ</strain>
        <tissue>Brain</tissue>
    </source>
</reference>
<reference key="2">
    <citation type="journal article" date="2004" name="DNA Res.">
        <title>Prediction of the coding sequences of mouse homologues of KIAA gene: IV. The complete nucleotide sequences of 500 mouse KIAA-homologous cDNAs identified by screening of terminal sequences of cDNA clones randomly sampled from size-fractionated libraries.</title>
        <authorList>
            <person name="Okazaki N."/>
            <person name="Kikuno R."/>
            <person name="Ohara R."/>
            <person name="Inamoto S."/>
            <person name="Koseki H."/>
            <person name="Hiraoka S."/>
            <person name="Saga Y."/>
            <person name="Seino S."/>
            <person name="Nishimura M."/>
            <person name="Kaisho T."/>
            <person name="Hoshino K."/>
            <person name="Kitamura H."/>
            <person name="Nagase T."/>
            <person name="Ohara O."/>
            <person name="Koga H."/>
        </authorList>
    </citation>
    <scope>NUCLEOTIDE SEQUENCE [LARGE SCALE MRNA] (ISOFORM 5)</scope>
    <source>
        <tissue>Brain</tissue>
    </source>
</reference>
<reference key="3">
    <citation type="journal article" date="2004" name="Genome Res.">
        <title>The status, quality, and expansion of the NIH full-length cDNA project: the Mammalian Gene Collection (MGC).</title>
        <authorList>
            <consortium name="The MGC Project Team"/>
        </authorList>
    </citation>
    <scope>NUCLEOTIDE SEQUENCE [LARGE SCALE MRNA] (ISOFORMS 1 AND 5)</scope>
    <source>
        <tissue>Brain</tissue>
    </source>
</reference>
<reference key="4">
    <citation type="journal article" date="2006" name="EMBO J.">
        <title>CPEB3 and CPEB4 in neurons: analysis of RNA-binding specificity and translational control of AMPA receptor GluR2 mRNA.</title>
        <authorList>
            <person name="Huang Y.S."/>
            <person name="Kan M.C."/>
            <person name="Lin C.L."/>
            <person name="Richter J.D."/>
        </authorList>
    </citation>
    <scope>FUNCTION</scope>
    <scope>SUBCELLULAR LOCATION</scope>
    <scope>TISSUE SPECIFICITY</scope>
</reference>
<reference key="5">
    <citation type="journal article" date="2009" name="Immunity">
        <title>The phagosomal proteome in interferon-gamma-activated macrophages.</title>
        <authorList>
            <person name="Trost M."/>
            <person name="English L."/>
            <person name="Lemieux S."/>
            <person name="Courcelles M."/>
            <person name="Desjardins M."/>
            <person name="Thibault P."/>
        </authorList>
    </citation>
    <scope>PHOSPHORYLATION [LARGE SCALE ANALYSIS] AT SER-97</scope>
    <scope>IDENTIFICATION BY MASS SPECTROMETRY [LARGE SCALE ANALYSIS]</scope>
</reference>
<reference key="6">
    <citation type="journal article" date="2010" name="Cell">
        <title>A tissue-specific atlas of mouse protein phosphorylation and expression.</title>
        <authorList>
            <person name="Huttlin E.L."/>
            <person name="Jedrychowski M.P."/>
            <person name="Elias J.E."/>
            <person name="Goswami T."/>
            <person name="Rad R."/>
            <person name="Beausoleil S.A."/>
            <person name="Villen J."/>
            <person name="Haas W."/>
            <person name="Sowa M.E."/>
            <person name="Gygi S.P."/>
        </authorList>
    </citation>
    <scope>PHOSPHORYLATION [LARGE SCALE ANALYSIS] AT SER-97 AND SER-99</scope>
    <scope>IDENTIFICATION BY MASS SPECTROMETRY [LARGE SCALE ANALYSIS]</scope>
    <source>
        <tissue>Brain</tissue>
        <tissue>Kidney</tissue>
        <tissue>Spleen</tissue>
    </source>
</reference>
<reference key="7">
    <citation type="journal article" date="2011" name="Nat. Med.">
        <title>Key contribution of CPEB4-mediated translational control to cancer progression.</title>
        <authorList>
            <person name="Ortiz-Zapater E."/>
            <person name="Pineda D."/>
            <person name="Martinez-Bosch N."/>
            <person name="Fernandez-Miranda G."/>
            <person name="Iglesias M."/>
            <person name="Alameda F."/>
            <person name="Moreno M."/>
            <person name="Eliscovich C."/>
            <person name="Eyras E."/>
            <person name="Real F.X."/>
            <person name="Mendez R."/>
            <person name="Navarro P."/>
        </authorList>
    </citation>
    <scope>FUNCTION</scope>
</reference>
<reference key="8">
    <citation type="journal article" date="2013" name="PLoS ONE">
        <title>CPEB4 knockout mice exhibit normal hippocampus-related synaptic plasticity and memory.</title>
        <authorList>
            <person name="Tsai L.Y."/>
            <person name="Chang Y.W."/>
            <person name="Lin P.Y."/>
            <person name="Chou H.J."/>
            <person name="Liu T.J."/>
            <person name="Lee P.T."/>
            <person name="Huang W.H."/>
            <person name="Tsou Y.L."/>
            <person name="Huang Y.S."/>
        </authorList>
    </citation>
    <scope>FUNCTION</scope>
    <scope>SUBCELLULAR LOCATION</scope>
    <scope>TISSUE SPECIFICITY</scope>
    <scope>DISRUPTION PHENOTYPE</scope>
</reference>
<reference key="9">
    <citation type="journal article" date="2016" name="Sci. Rep.">
        <title>Impaired neurodevelopment by the low complexity domain of CPEB4 reveals a convergent pathway with neurodegeneration.</title>
        <authorList>
            <person name="Shin J."/>
            <person name="Salameh J.S."/>
            <person name="Richter J.D."/>
        </authorList>
    </citation>
    <scope>SUBCELLULAR LOCATION</scope>
    <scope>TISSUE SPECIFICITY</scope>
    <scope>DEVELOPMENTAL STAGE</scope>
</reference>
<reference key="10">
    <citation type="journal article" date="2017" name="Nat. Cell Biol.">
        <title>Circadian- and UPR-dependent control of CPEB4 mediates a translational response to counteract hepatic steatosis under ER stress.</title>
        <authorList>
            <person name="Maillo C."/>
            <person name="Martin J."/>
            <person name="Sebastian D."/>
            <person name="Hernandez-Alvarez M."/>
            <person name="Garcia-Rocha M."/>
            <person name="Reina O."/>
            <person name="Zorzano A."/>
            <person name="Fernandez M."/>
            <person name="Mendez R."/>
        </authorList>
    </citation>
    <scope>FUNCTION</scope>
    <scope>SUBCELLULAR LOCATION</scope>
    <scope>TISSUE SPECIFICITY</scope>
    <scope>INDUCTION BY ER STRESS</scope>
    <scope>DISRUPTION PHENOTYPE</scope>
</reference>
<keyword id="KW-0025">Alternative splicing</keyword>
<keyword id="KW-0966">Cell projection</keyword>
<keyword id="KW-0963">Cytoplasm</keyword>
<keyword id="KW-0256">Endoplasmic reticulum</keyword>
<keyword id="KW-0479">Metal-binding</keyword>
<keyword id="KW-0597">Phosphoprotein</keyword>
<keyword id="KW-1185">Reference proteome</keyword>
<keyword id="KW-0677">Repeat</keyword>
<keyword id="KW-0694">RNA-binding</keyword>
<keyword id="KW-0770">Synapse</keyword>
<keyword id="KW-0862">Zinc</keyword>
<accession>Q7TN98</accession>
<accession>A6H6G0</accession>
<accession>Q69ZD7</accession>
<evidence type="ECO:0000250" key="1">
    <source>
        <dbReference type="UniProtKB" id="Q17RY0"/>
    </source>
</evidence>
<evidence type="ECO:0000250" key="2">
    <source>
        <dbReference type="UniProtKB" id="Q9BZB8"/>
    </source>
</evidence>
<evidence type="ECO:0000255" key="3">
    <source>
        <dbReference type="PROSITE-ProRule" id="PRU00176"/>
    </source>
</evidence>
<evidence type="ECO:0000256" key="4">
    <source>
        <dbReference type="SAM" id="MobiDB-lite"/>
    </source>
</evidence>
<evidence type="ECO:0000269" key="5">
    <source>
    </source>
</evidence>
<evidence type="ECO:0000269" key="6">
    <source>
    </source>
</evidence>
<evidence type="ECO:0000269" key="7">
    <source>
    </source>
</evidence>
<evidence type="ECO:0000269" key="8">
    <source>
    </source>
</evidence>
<evidence type="ECO:0000269" key="9">
    <source>
    </source>
</evidence>
<evidence type="ECO:0000269" key="10">
    <source>
    </source>
</evidence>
<evidence type="ECO:0000303" key="11">
    <source>
    </source>
</evidence>
<evidence type="ECO:0000303" key="12">
    <source>
    </source>
</evidence>
<evidence type="ECO:0000303" key="13">
    <source>
    </source>
</evidence>
<evidence type="ECO:0000305" key="14"/>
<evidence type="ECO:0007744" key="15">
    <source>
    </source>
</evidence>
<evidence type="ECO:0007744" key="16">
    <source>
    </source>
</evidence>
<sequence>MGDYGFGVLVQSNTGNKSAFPVRFHPHLQPPHHHQNATPNPAAFINNNTAANGSSAGSAWLFPAPATHNIQDEILGSEKAKSQQQEQQDPLEKQQLSPSPGQEAGILPETEKAKAEENPGDSSSENSNGKEKLRIESPVLTGFDYQEATGLGTSTQPLTSSASSLTGFSNWSAAIAPSSSTIINEDASFFHQGGVPGASANNGALLFQNFPHHVSPGFGGSFSPQIGPLSQHHPHHPHFQHHHSQHQQQRRSPASPHPPPFTHRSAAFNQLPHLANNLNKPPSPWSSYQSPSPTPSSSWSPGGGGYGGWGASQGRDHRRGLNGGITPLNSISPLKKNFASNHIQLQKYARPSSAFAPKSWMEDSLNRADNIFPFPERPRTFDMHSLESSLIDIMRAENDSIKGRLNYSYPGSDSSLLINARTYGRRRGQSSLFPMEDGFLDDGRGDQPLHSGLGSPHCFTHQNGERVERYSRKVFVGGLPPDIDEDEITASFRRFGPLIVDWPHKAESKSYFPPKGYAFLLFQDESSVQALIDACIEEDGKLYLCVSSPTIKDKPVQIRPWNLSDSDFVMDGSQPLDPRKTIFVGGVPRPLRAVELAMIMDRLYGGVCYAGIDTDPELKYPKGAGRVAFSNQQSYIAAISARFVQLQHGEIDKRVEVKPYVLDDQLCDECQGARCGGKFAPFFCANVTCLQYYCEYCWAAIHSRAGREFHKPLVKEGGDRPRHISFRWN</sequence>
<gene>
    <name type="primary">Cpeb4</name>
    <name type="synonym">Kiaa1673</name>
</gene>